<name>ADDA_HELMI</name>
<feature type="chain" id="PRO_0000379274" description="ATP-dependent helicase/nuclease subunit A">
    <location>
        <begin position="1"/>
        <end position="1396"/>
    </location>
</feature>
<feature type="domain" description="UvrD-like helicase ATP-binding" evidence="1">
    <location>
        <begin position="26"/>
        <end position="532"/>
    </location>
</feature>
<feature type="domain" description="UvrD-like helicase C-terminal" evidence="1">
    <location>
        <begin position="615"/>
        <end position="920"/>
    </location>
</feature>
<feature type="region of interest" description="Disordered" evidence="2">
    <location>
        <begin position="1"/>
        <end position="25"/>
    </location>
</feature>
<feature type="region of interest" description="Disordered" evidence="2">
    <location>
        <begin position="590"/>
        <end position="649"/>
    </location>
</feature>
<feature type="region of interest" description="Disordered" evidence="2">
    <location>
        <begin position="1171"/>
        <end position="1205"/>
    </location>
</feature>
<feature type="compositionally biased region" description="Low complexity" evidence="2">
    <location>
        <begin position="1181"/>
        <end position="1199"/>
    </location>
</feature>
<feature type="binding site" evidence="1">
    <location>
        <begin position="47"/>
        <end position="54"/>
    </location>
    <ligand>
        <name>ATP</name>
        <dbReference type="ChEBI" id="CHEBI:30616"/>
    </ligand>
</feature>
<protein>
    <recommendedName>
        <fullName evidence="1">ATP-dependent helicase/nuclease subunit A</fullName>
        <ecNumber evidence="1">3.1.-.-</ecNumber>
        <ecNumber evidence="1">5.6.2.4</ecNumber>
    </recommendedName>
    <alternativeName>
        <fullName evidence="1">ATP-dependent helicase/nuclease AddA</fullName>
    </alternativeName>
    <alternativeName>
        <fullName evidence="1">DNA 3'-5' helicase AddA</fullName>
    </alternativeName>
</protein>
<reference key="1">
    <citation type="journal article" date="2008" name="J. Bacteriol.">
        <title>The genome of Heliobacterium modesticaldum, a phototrophic representative of the Firmicutes containing the simplest photosynthetic apparatus.</title>
        <authorList>
            <person name="Sattley W.M."/>
            <person name="Madigan M.T."/>
            <person name="Swingley W.D."/>
            <person name="Cheung P.C."/>
            <person name="Clocksin K.M."/>
            <person name="Conrad A.L."/>
            <person name="Dejesa L.C."/>
            <person name="Honchak B.M."/>
            <person name="Jung D.O."/>
            <person name="Karbach L.E."/>
            <person name="Kurdoglu A."/>
            <person name="Lahiri S."/>
            <person name="Mastrian S.D."/>
            <person name="Page L.E."/>
            <person name="Taylor H.L."/>
            <person name="Wang Z.T."/>
            <person name="Raymond J."/>
            <person name="Chen M."/>
            <person name="Blankenship R.E."/>
            <person name="Touchman J.W."/>
        </authorList>
    </citation>
    <scope>NUCLEOTIDE SEQUENCE [LARGE SCALE GENOMIC DNA]</scope>
    <source>
        <strain>ATCC 51547 / Ice1</strain>
    </source>
</reference>
<dbReference type="EC" id="3.1.-.-" evidence="1"/>
<dbReference type="EC" id="5.6.2.4" evidence="1"/>
<dbReference type="EMBL" id="CP000930">
    <property type="protein sequence ID" value="ABZ85505.1"/>
    <property type="molecule type" value="Genomic_DNA"/>
</dbReference>
<dbReference type="RefSeq" id="WP_012283980.1">
    <property type="nucleotide sequence ID" value="NC_010337.2"/>
</dbReference>
<dbReference type="SMR" id="B0TDI0"/>
<dbReference type="STRING" id="498761.HM1_2996"/>
<dbReference type="KEGG" id="hmo:HM1_2996"/>
<dbReference type="eggNOG" id="COG1074">
    <property type="taxonomic scope" value="Bacteria"/>
</dbReference>
<dbReference type="HOGENOM" id="CLU_001114_3_1_9"/>
<dbReference type="OrthoDB" id="9810135at2"/>
<dbReference type="Proteomes" id="UP000008550">
    <property type="component" value="Chromosome"/>
</dbReference>
<dbReference type="GO" id="GO:0005829">
    <property type="term" value="C:cytosol"/>
    <property type="evidence" value="ECO:0007669"/>
    <property type="project" value="TreeGrafter"/>
</dbReference>
<dbReference type="GO" id="GO:0033202">
    <property type="term" value="C:DNA helicase complex"/>
    <property type="evidence" value="ECO:0007669"/>
    <property type="project" value="TreeGrafter"/>
</dbReference>
<dbReference type="GO" id="GO:0043138">
    <property type="term" value="F:3'-5' DNA helicase activity"/>
    <property type="evidence" value="ECO:0007669"/>
    <property type="project" value="UniProtKB-UniRule"/>
</dbReference>
<dbReference type="GO" id="GO:0008408">
    <property type="term" value="F:3'-5' exonuclease activity"/>
    <property type="evidence" value="ECO:0007669"/>
    <property type="project" value="UniProtKB-UniRule"/>
</dbReference>
<dbReference type="GO" id="GO:0005524">
    <property type="term" value="F:ATP binding"/>
    <property type="evidence" value="ECO:0007669"/>
    <property type="project" value="UniProtKB-UniRule"/>
</dbReference>
<dbReference type="GO" id="GO:0016887">
    <property type="term" value="F:ATP hydrolysis activity"/>
    <property type="evidence" value="ECO:0007669"/>
    <property type="project" value="RHEA"/>
</dbReference>
<dbReference type="GO" id="GO:0003690">
    <property type="term" value="F:double-stranded DNA binding"/>
    <property type="evidence" value="ECO:0007669"/>
    <property type="project" value="UniProtKB-UniRule"/>
</dbReference>
<dbReference type="GO" id="GO:0000724">
    <property type="term" value="P:double-strand break repair via homologous recombination"/>
    <property type="evidence" value="ECO:0007669"/>
    <property type="project" value="UniProtKB-UniRule"/>
</dbReference>
<dbReference type="FunFam" id="3.40.50.300:FF:001236">
    <property type="entry name" value="ATP-dependent helicase/nuclease subunit A"/>
    <property type="match status" value="1"/>
</dbReference>
<dbReference type="Gene3D" id="3.90.320.10">
    <property type="match status" value="1"/>
</dbReference>
<dbReference type="Gene3D" id="6.10.250.2380">
    <property type="match status" value="1"/>
</dbReference>
<dbReference type="Gene3D" id="3.40.50.300">
    <property type="entry name" value="P-loop containing nucleotide triphosphate hydrolases"/>
    <property type="match status" value="3"/>
</dbReference>
<dbReference type="HAMAP" id="MF_01451">
    <property type="entry name" value="AddA"/>
    <property type="match status" value="1"/>
</dbReference>
<dbReference type="InterPro" id="IPR014152">
    <property type="entry name" value="AddA"/>
</dbReference>
<dbReference type="InterPro" id="IPR014017">
    <property type="entry name" value="DNA_helicase_UvrD-like_C"/>
</dbReference>
<dbReference type="InterPro" id="IPR000212">
    <property type="entry name" value="DNA_helicase_UvrD/REP"/>
</dbReference>
<dbReference type="InterPro" id="IPR027417">
    <property type="entry name" value="P-loop_NTPase"/>
</dbReference>
<dbReference type="InterPro" id="IPR011604">
    <property type="entry name" value="PDDEXK-like_dom_sf"/>
</dbReference>
<dbReference type="InterPro" id="IPR038726">
    <property type="entry name" value="PDDEXK_AddAB-type"/>
</dbReference>
<dbReference type="InterPro" id="IPR011335">
    <property type="entry name" value="Restrct_endonuc-II-like"/>
</dbReference>
<dbReference type="InterPro" id="IPR014016">
    <property type="entry name" value="UvrD-like_ATP-bd"/>
</dbReference>
<dbReference type="PANTHER" id="PTHR11070:SF48">
    <property type="entry name" value="ATP-DEPENDENT HELICASE_NUCLEASE SUBUNIT A"/>
    <property type="match status" value="1"/>
</dbReference>
<dbReference type="PANTHER" id="PTHR11070">
    <property type="entry name" value="UVRD / RECB / PCRA DNA HELICASE FAMILY MEMBER"/>
    <property type="match status" value="1"/>
</dbReference>
<dbReference type="Pfam" id="PF12705">
    <property type="entry name" value="PDDEXK_1"/>
    <property type="match status" value="1"/>
</dbReference>
<dbReference type="Pfam" id="PF00580">
    <property type="entry name" value="UvrD-helicase"/>
    <property type="match status" value="1"/>
</dbReference>
<dbReference type="Pfam" id="PF13361">
    <property type="entry name" value="UvrD_C"/>
    <property type="match status" value="1"/>
</dbReference>
<dbReference type="SUPFAM" id="SSF52540">
    <property type="entry name" value="P-loop containing nucleoside triphosphate hydrolases"/>
    <property type="match status" value="1"/>
</dbReference>
<dbReference type="SUPFAM" id="SSF52980">
    <property type="entry name" value="Restriction endonuclease-like"/>
    <property type="match status" value="1"/>
</dbReference>
<dbReference type="PROSITE" id="PS51198">
    <property type="entry name" value="UVRD_HELICASE_ATP_BIND"/>
    <property type="match status" value="1"/>
</dbReference>
<dbReference type="PROSITE" id="PS51217">
    <property type="entry name" value="UVRD_HELICASE_CTER"/>
    <property type="match status" value="1"/>
</dbReference>
<evidence type="ECO:0000255" key="1">
    <source>
        <dbReference type="HAMAP-Rule" id="MF_01451"/>
    </source>
</evidence>
<evidence type="ECO:0000256" key="2">
    <source>
        <dbReference type="SAM" id="MobiDB-lite"/>
    </source>
</evidence>
<keyword id="KW-0067">ATP-binding</keyword>
<keyword id="KW-0227">DNA damage</keyword>
<keyword id="KW-0234">DNA repair</keyword>
<keyword id="KW-0238">DNA-binding</keyword>
<keyword id="KW-0269">Exonuclease</keyword>
<keyword id="KW-0347">Helicase</keyword>
<keyword id="KW-0378">Hydrolase</keyword>
<keyword id="KW-0413">Isomerase</keyword>
<keyword id="KW-0540">Nuclease</keyword>
<keyword id="KW-0547">Nucleotide-binding</keyword>
<keyword id="KW-1185">Reference proteome</keyword>
<comment type="function">
    <text evidence="1">The heterodimer acts as both an ATP-dependent DNA helicase and an ATP-dependent, dual-direction single-stranded exonuclease. Recognizes the chi site generating a DNA molecule suitable for the initiation of homologous recombination. The AddA nuclease domain is required for chi fragment generation; this subunit has the helicase and 3' -&gt; 5' nuclease activities.</text>
</comment>
<comment type="catalytic activity">
    <reaction evidence="1">
        <text>Couples ATP hydrolysis with the unwinding of duplex DNA by translocating in the 3'-5' direction.</text>
        <dbReference type="EC" id="5.6.2.4"/>
    </reaction>
</comment>
<comment type="catalytic activity">
    <reaction evidence="1">
        <text>ATP + H2O = ADP + phosphate + H(+)</text>
        <dbReference type="Rhea" id="RHEA:13065"/>
        <dbReference type="ChEBI" id="CHEBI:15377"/>
        <dbReference type="ChEBI" id="CHEBI:15378"/>
        <dbReference type="ChEBI" id="CHEBI:30616"/>
        <dbReference type="ChEBI" id="CHEBI:43474"/>
        <dbReference type="ChEBI" id="CHEBI:456216"/>
        <dbReference type="EC" id="5.6.2.4"/>
    </reaction>
</comment>
<comment type="cofactor">
    <cofactor evidence="1">
        <name>Mg(2+)</name>
        <dbReference type="ChEBI" id="CHEBI:18420"/>
    </cofactor>
</comment>
<comment type="subunit">
    <text evidence="1">Heterodimer of AddA and AddB/RexB.</text>
</comment>
<comment type="similarity">
    <text evidence="1">Belongs to the helicase family. AddA subfamily.</text>
</comment>
<sequence>MNREALCHDDPIGHDRLRPDSIPRDPKWTDEQWQAITARNSDILVAAAAGAGKTAVLVERLIGIIKEGVDVDRLLVVTFTNAAAAEMRERIRTALTKELARHPHQTWLRQQLVLLNRATITTLHSFCLDLVRKYYYRLDLDPAFRVADETEIALLRQDVLDEVFERFYERAGAKEGTESKGEYFTALVDAYGGDRDDSPLQDIVLQLYEKALSQPWPEQWLQDILGKFQEAGDTIAEQTLPGELPAWEALPWFAALREEMSIDLAEVESLLVRALSLCRQPGGPAAYGDAVTADLQLTQDLHLAAGRSWTQLHECFQALSFTRVKAVRGPVDESLKKEVSRLRYQAKKKLTDLQKKYFLRTPHDLVSDLTQVLPLMATLVDVVLAFDRAFQAAKREKRLVDFNDLEHFCLRLLLDESASPGVPVPSSLALELKEHFAEVLTDEYQDTNTVQETILTLLSRNNRFMVGDVKQSIYRFRLAEPNLFLEKYRSFSPYDTPGPVNSDHGAPDHAFSGQGASVPGARIDLAKNFRSRRNVLSAVNDLFRRIMTPRAGEMAYDRQAELVYGAAFPELPGRSGDPVIELWLLQRQPDADGSEESIETQQNANETKGAIDGDHKNIAKAGESPAQNTADVAGESPSDDAGEDAGQPTGGEEELLLLETAQYEARLAARRIEELMKSAMPVYDREQGGYRPVCYRDIVILMRSTKGRADIFLEEFRAAAIPAYADTGAGYFEATEVSILLSLLRVIDNPCQDIPLAAVLRSPIFRFTGEDLARIRLAEPRKTFFDAIEAFIGQAEAAARDTFTPIDPVAIRLREFLRQIDAWRTLARRDSLAKLIATIYRETGFYDYAGAMPGGGQRQANLRALYDRARQYEATTLRGLFRFLRFIERLQDQGGDLGTARTLGEKEDVVRIMSIHKSKGLEFPVVFVAGLGSQFNLQDLRRDLLIHKNLGLGPVVVDTQLRYRYPTVAKLAIQRRLHRETLAEEMRILYVALTRAKEKLILLGTVREVAKSAQQWLHDAEGIPVAAALPDEVLLRAKCYLDWIGPALVGHPDGQEIRRWAEGAPALGATLPENNLTMTKNETMTEQERIDGSSRWRLFYAAKKELIGLRKETGSETPFNPVWLEKLRRLEPIIPTDLVDASLSWSYPYTGLSGIAAKVAVSRIKKQFVWHSPETPPSSETPPSLEIPPSLETPPSLETQTPSPDALVDLRPRFLQQDRRLTATERGSAVHLFLQHLDLAGEISQAGIAGQADRLVKLELLSLEQRQALNEEEILRFLESPLGHRLRKAKQVMREVPFTLALPAAEIYPEKRAEGESVIIQGVIDCLFEEDDGWLLLDYKTDRCPVGMDRERWLQQLRDSYLGQVNLYHRAVESVLKVKVKGRCLFLLSIGREMAL</sequence>
<accession>B0TDI0</accession>
<gene>
    <name evidence="1" type="primary">addA</name>
    <name type="ordered locus">Helmi_28800</name>
    <name type="ORF">HM1_2996</name>
</gene>
<organism>
    <name type="scientific">Heliobacterium modesticaldum (strain ATCC 51547 / Ice1)</name>
    <dbReference type="NCBI Taxonomy" id="498761"/>
    <lineage>
        <taxon>Bacteria</taxon>
        <taxon>Bacillati</taxon>
        <taxon>Bacillota</taxon>
        <taxon>Clostridia</taxon>
        <taxon>Eubacteriales</taxon>
        <taxon>Heliobacteriaceae</taxon>
        <taxon>Heliomicrobium</taxon>
    </lineage>
</organism>
<proteinExistence type="inferred from homology"/>